<gene>
    <name evidence="1" type="primary">kup</name>
    <name type="ordered locus">Anae109_0989</name>
</gene>
<sequence length="663" mass="71322">MSDNPSSRAGPEVVPTPPPSPAAEAAVTALPAHGHRPPATGSALAKLALGALGVVYGDIGTSPLYALKECFTGHHGVQATPANVLGVLSLVFWAMTFVVTFKYLSFVMRADNRGEGGILALLALVGKHEVRRSGKQLLIILGLFGAALLYGDGVITPAISVLGAVEGLSVAAPALEHWVVPVTVGILALLFFIQRRGTAAVGAVFGPVMLVWFLCIAILGVRGILFDATILQAVLPTHAVAFFARNSWHGFLVLGGVVLVITGGEALYADMGHFGKRPIRFAWLLVAMPALMLNYMGQGAILLHDPQAARNPFYLLVPGWALYPMIAVATAAAIVASQALISGAFSLTRQAVQLGYSPRVTIRHTSSTEIGQIYVPEVNALLGAATIALVLGFKSSSNLAAAYGIAVTGTMAITTLLFHRVARDLWRWPRWRAWPLTLLFLLVDLAFFGANIVKVEEGGWFPLAAAAFVFTLLSTWKRGREGLADLMRGAGLPLDVFLEDIARRKPQRVPGTAVFMTGNTGTVPPVLLHHLKHNKVLHERVVLTSIMSEEIPSVRDAERVTVKELGSGFIQVIARYGFMETPDVPAMFASLPHRKLDGPRIELKPMETTYYLGRETLLPTGPSKMARWRKRLFIIMSRNAQTASAFFGLPPNRVVEMGAQLQL</sequence>
<reference key="1">
    <citation type="journal article" date="2015" name="Genome Announc.">
        <title>Complete genome sequence of Anaeromyxobacter sp. Fw109-5, an anaerobic, metal-reducing bacterium isolated from a contaminated subsurface environment.</title>
        <authorList>
            <person name="Hwang C."/>
            <person name="Copeland A."/>
            <person name="Lucas S."/>
            <person name="Lapidus A."/>
            <person name="Barry K."/>
            <person name="Glavina Del Rio T."/>
            <person name="Dalin E."/>
            <person name="Tice H."/>
            <person name="Pitluck S."/>
            <person name="Sims D."/>
            <person name="Brettin T."/>
            <person name="Bruce D.C."/>
            <person name="Detter J.C."/>
            <person name="Han C.S."/>
            <person name="Schmutz J."/>
            <person name="Larimer F.W."/>
            <person name="Land M.L."/>
            <person name="Hauser L.J."/>
            <person name="Kyrpides N."/>
            <person name="Lykidis A."/>
            <person name="Richardson P."/>
            <person name="Belieav A."/>
            <person name="Sanford R.A."/>
            <person name="Loeffler F.E."/>
            <person name="Fields M.W."/>
        </authorList>
    </citation>
    <scope>NUCLEOTIDE SEQUENCE [LARGE SCALE GENOMIC DNA]</scope>
    <source>
        <strain>Fw109-5</strain>
    </source>
</reference>
<protein>
    <recommendedName>
        <fullName evidence="1">Probable potassium transport system protein Kup</fullName>
    </recommendedName>
</protein>
<feature type="chain" id="PRO_0000315981" description="Probable potassium transport system protein Kup">
    <location>
        <begin position="1"/>
        <end position="663"/>
    </location>
</feature>
<feature type="transmembrane region" description="Helical" evidence="1">
    <location>
        <begin position="81"/>
        <end position="101"/>
    </location>
</feature>
<feature type="transmembrane region" description="Helical" evidence="1">
    <location>
        <begin position="137"/>
        <end position="157"/>
    </location>
</feature>
<feature type="transmembrane region" description="Helical" evidence="1">
    <location>
        <begin position="173"/>
        <end position="193"/>
    </location>
</feature>
<feature type="transmembrane region" description="Helical" evidence="1">
    <location>
        <begin position="201"/>
        <end position="221"/>
    </location>
</feature>
<feature type="transmembrane region" description="Helical" evidence="1">
    <location>
        <begin position="224"/>
        <end position="244"/>
    </location>
</feature>
<feature type="transmembrane region" description="Helical" evidence="1">
    <location>
        <begin position="248"/>
        <end position="268"/>
    </location>
</feature>
<feature type="transmembrane region" description="Helical" evidence="1">
    <location>
        <begin position="283"/>
        <end position="303"/>
    </location>
</feature>
<feature type="transmembrane region" description="Helical" evidence="1">
    <location>
        <begin position="315"/>
        <end position="335"/>
    </location>
</feature>
<feature type="transmembrane region" description="Helical" evidence="1">
    <location>
        <begin position="373"/>
        <end position="393"/>
    </location>
</feature>
<feature type="transmembrane region" description="Helical" evidence="1">
    <location>
        <begin position="399"/>
        <end position="419"/>
    </location>
</feature>
<feature type="transmembrane region" description="Helical" evidence="1">
    <location>
        <begin position="433"/>
        <end position="453"/>
    </location>
</feature>
<feature type="transmembrane region" description="Helical" evidence="1">
    <location>
        <begin position="455"/>
        <end position="475"/>
    </location>
</feature>
<feature type="region of interest" description="Disordered" evidence="2">
    <location>
        <begin position="1"/>
        <end position="23"/>
    </location>
</feature>
<comment type="function">
    <text evidence="1">Transport of potassium into the cell. Likely operates as a K(+):H(+) symporter.</text>
</comment>
<comment type="catalytic activity">
    <reaction evidence="1">
        <text>K(+)(in) + H(+)(in) = K(+)(out) + H(+)(out)</text>
        <dbReference type="Rhea" id="RHEA:28490"/>
        <dbReference type="ChEBI" id="CHEBI:15378"/>
        <dbReference type="ChEBI" id="CHEBI:29103"/>
    </reaction>
    <physiologicalReaction direction="right-to-left" evidence="1">
        <dbReference type="Rhea" id="RHEA:28492"/>
    </physiologicalReaction>
</comment>
<comment type="subcellular location">
    <subcellularLocation>
        <location evidence="1">Cell inner membrane</location>
        <topology evidence="1">Multi-pass membrane protein</topology>
    </subcellularLocation>
</comment>
<comment type="similarity">
    <text evidence="1">Belongs to the HAK/KUP transporter (TC 2.A.72) family.</text>
</comment>
<dbReference type="EMBL" id="CP000769">
    <property type="protein sequence ID" value="ABS25198.1"/>
    <property type="molecule type" value="Genomic_DNA"/>
</dbReference>
<dbReference type="RefSeq" id="WP_011985304.1">
    <property type="nucleotide sequence ID" value="NC_009675.1"/>
</dbReference>
<dbReference type="SMR" id="A7H902"/>
<dbReference type="STRING" id="404589.Anae109_0989"/>
<dbReference type="KEGG" id="afw:Anae109_0989"/>
<dbReference type="eggNOG" id="COG3158">
    <property type="taxonomic scope" value="Bacteria"/>
</dbReference>
<dbReference type="HOGENOM" id="CLU_008142_4_2_7"/>
<dbReference type="OrthoDB" id="9805577at2"/>
<dbReference type="Proteomes" id="UP000006382">
    <property type="component" value="Chromosome"/>
</dbReference>
<dbReference type="GO" id="GO:0005886">
    <property type="term" value="C:plasma membrane"/>
    <property type="evidence" value="ECO:0007669"/>
    <property type="project" value="UniProtKB-SubCell"/>
</dbReference>
<dbReference type="GO" id="GO:0015079">
    <property type="term" value="F:potassium ion transmembrane transporter activity"/>
    <property type="evidence" value="ECO:0007669"/>
    <property type="project" value="UniProtKB-UniRule"/>
</dbReference>
<dbReference type="GO" id="GO:0015293">
    <property type="term" value="F:symporter activity"/>
    <property type="evidence" value="ECO:0007669"/>
    <property type="project" value="UniProtKB-UniRule"/>
</dbReference>
<dbReference type="HAMAP" id="MF_01522">
    <property type="entry name" value="Kup"/>
    <property type="match status" value="1"/>
</dbReference>
<dbReference type="InterPro" id="IPR003855">
    <property type="entry name" value="K+_transporter"/>
</dbReference>
<dbReference type="InterPro" id="IPR053952">
    <property type="entry name" value="K_trans_C"/>
</dbReference>
<dbReference type="InterPro" id="IPR053951">
    <property type="entry name" value="K_trans_N"/>
</dbReference>
<dbReference type="InterPro" id="IPR023051">
    <property type="entry name" value="Kup"/>
</dbReference>
<dbReference type="PANTHER" id="PTHR30540:SF79">
    <property type="entry name" value="LOW AFFINITY POTASSIUM TRANSPORT SYSTEM PROTEIN KUP"/>
    <property type="match status" value="1"/>
</dbReference>
<dbReference type="PANTHER" id="PTHR30540">
    <property type="entry name" value="OSMOTIC STRESS POTASSIUM TRANSPORTER"/>
    <property type="match status" value="1"/>
</dbReference>
<dbReference type="Pfam" id="PF02705">
    <property type="entry name" value="K_trans"/>
    <property type="match status" value="1"/>
</dbReference>
<dbReference type="Pfam" id="PF22776">
    <property type="entry name" value="K_trans_C"/>
    <property type="match status" value="1"/>
</dbReference>
<accession>A7H902</accession>
<name>KUP_ANADF</name>
<proteinExistence type="inferred from homology"/>
<keyword id="KW-0997">Cell inner membrane</keyword>
<keyword id="KW-1003">Cell membrane</keyword>
<keyword id="KW-0406">Ion transport</keyword>
<keyword id="KW-0472">Membrane</keyword>
<keyword id="KW-0630">Potassium</keyword>
<keyword id="KW-0633">Potassium transport</keyword>
<keyword id="KW-1185">Reference proteome</keyword>
<keyword id="KW-0769">Symport</keyword>
<keyword id="KW-0812">Transmembrane</keyword>
<keyword id="KW-1133">Transmembrane helix</keyword>
<keyword id="KW-0813">Transport</keyword>
<evidence type="ECO:0000255" key="1">
    <source>
        <dbReference type="HAMAP-Rule" id="MF_01522"/>
    </source>
</evidence>
<evidence type="ECO:0000256" key="2">
    <source>
        <dbReference type="SAM" id="MobiDB-lite"/>
    </source>
</evidence>
<organism>
    <name type="scientific">Anaeromyxobacter sp. (strain Fw109-5)</name>
    <dbReference type="NCBI Taxonomy" id="404589"/>
    <lineage>
        <taxon>Bacteria</taxon>
        <taxon>Pseudomonadati</taxon>
        <taxon>Myxococcota</taxon>
        <taxon>Myxococcia</taxon>
        <taxon>Myxococcales</taxon>
        <taxon>Cystobacterineae</taxon>
        <taxon>Anaeromyxobacteraceae</taxon>
        <taxon>Anaeromyxobacter</taxon>
    </lineage>
</organism>